<accession>P68766</accession>
<accession>P11648</accession>
<comment type="function">
    <text evidence="1">Presumably involved in the processing and regular turnover of intracellular proteins. Catalyzes the removal of unsubstituted N-terminal amino acids from various peptides. Required for plasmid ColE1 site-specific recombination but not in its aminopeptidase activity. Could act as a structural component of the putative nucleoprotein complex in which the Xer recombination reaction takes place (By similarity).</text>
</comment>
<comment type="catalytic activity">
    <reaction>
        <text>Release of an N-terminal amino acid, Xaa-|-Yaa-, in which Xaa is preferably Leu, but may be other amino acids including Pro although not Arg or Lys, and Yaa may be Pro. Amino acid amides and methyl esters are also readily hydrolyzed, but rates on arylamides are exceedingly low.</text>
        <dbReference type="EC" id="3.4.11.1"/>
    </reaction>
</comment>
<comment type="catalytic activity">
    <reaction>
        <text>Release of an N-terminal amino acid, preferentially leucine, but not glutamic or aspartic acids.</text>
        <dbReference type="EC" id="3.4.11.10"/>
    </reaction>
</comment>
<comment type="cofactor">
    <cofactor evidence="1">
        <name>Mn(2+)</name>
        <dbReference type="ChEBI" id="CHEBI:29035"/>
    </cofactor>
    <text evidence="1">Binds 2 manganese ions per subunit.</text>
</comment>
<comment type="activity regulation">
    <text evidence="1">Inhibited by zinc and EDTA.</text>
</comment>
<comment type="subunit">
    <text evidence="1">Homohexamer.</text>
</comment>
<comment type="similarity">
    <text evidence="3">Belongs to the peptidase M17 family.</text>
</comment>
<sequence>MEFSVKSGSPEKQRSACIVVGVFEPRRLSPIAEQLDKISDGYISALLRRGELEGKPGQTLLLHHVPNVLSERILLIGCGKERELDERQYKQVIQKTINTLNDTGSMEAVCFLTELHVKGRNNYWKVRQAVETAKETLYSFDQLKTNKSEPRRPLRKMVFNVPTRRELTSGERAIQHGLAIAAGIKAAKDLGNMPPNICNAAYLASQARQLADSYSKNVITRVIGEQQMKELGMHSYLAVGQGSQNESLMSVIEYKGNASEDARPIVLVGKGLTFDSGGISIKPSEGMDEMKYDMCGAAAVYGVMRMVAELQLPINVIGVLAGCENMPGGRAYRPGDVLTTMSGQTVEVLNTDAEGRLVLCDVLTYVERFEPEAVIDVATLTGACVIALGHHITGLMANHNPLAHELIAASEQSGDRAWRLPLGDEYQEQLESNFADMANIGGRPGGAITAGCFLSRFTRKYNWAHLDIAGTAWRSGKAKGATGRPVALLAQFLLNRAGFNGEE</sequence>
<proteinExistence type="inferred from homology"/>
<keyword id="KW-0031">Aminopeptidase</keyword>
<keyword id="KW-0378">Hydrolase</keyword>
<keyword id="KW-0464">Manganese</keyword>
<keyword id="KW-0479">Metal-binding</keyword>
<keyword id="KW-0645">Protease</keyword>
<keyword id="KW-1185">Reference proteome</keyword>
<protein>
    <recommendedName>
        <fullName>Cytosol aminopeptidase</fullName>
        <ecNumber>3.4.11.1</ecNumber>
    </recommendedName>
    <alternativeName>
        <fullName>Aminopeptidase A/I</fullName>
    </alternativeName>
    <alternativeName>
        <fullName>Leucine aminopeptidase</fullName>
        <shortName>LAP</shortName>
        <ecNumber>3.4.11.10</ecNumber>
    </alternativeName>
    <alternativeName>
        <fullName>Leucyl aminopeptidase</fullName>
    </alternativeName>
</protein>
<gene>
    <name type="primary">pepA</name>
    <name type="synonym">carP</name>
    <name type="synonym">xerB</name>
    <name type="ordered locus">c5360</name>
</gene>
<organism>
    <name type="scientific">Escherichia coli O6:H1 (strain CFT073 / ATCC 700928 / UPEC)</name>
    <dbReference type="NCBI Taxonomy" id="199310"/>
    <lineage>
        <taxon>Bacteria</taxon>
        <taxon>Pseudomonadati</taxon>
        <taxon>Pseudomonadota</taxon>
        <taxon>Gammaproteobacteria</taxon>
        <taxon>Enterobacterales</taxon>
        <taxon>Enterobacteriaceae</taxon>
        <taxon>Escherichia</taxon>
    </lineage>
</organism>
<evidence type="ECO:0000250" key="1"/>
<evidence type="ECO:0000255" key="2"/>
<evidence type="ECO:0000305" key="3"/>
<feature type="chain" id="PRO_0000165751" description="Cytosol aminopeptidase">
    <location>
        <begin position="1"/>
        <end position="503"/>
    </location>
</feature>
<feature type="active site" evidence="2">
    <location>
        <position position="282"/>
    </location>
</feature>
<feature type="active site" evidence="2">
    <location>
        <position position="356"/>
    </location>
</feature>
<feature type="binding site" evidence="1">
    <location>
        <position position="270"/>
    </location>
    <ligand>
        <name>Mn(2+)</name>
        <dbReference type="ChEBI" id="CHEBI:29035"/>
        <label>2</label>
    </ligand>
</feature>
<feature type="binding site" evidence="1">
    <location>
        <position position="275"/>
    </location>
    <ligand>
        <name>Mn(2+)</name>
        <dbReference type="ChEBI" id="CHEBI:29035"/>
        <label>1</label>
    </ligand>
</feature>
<feature type="binding site" evidence="1">
    <location>
        <position position="275"/>
    </location>
    <ligand>
        <name>Mn(2+)</name>
        <dbReference type="ChEBI" id="CHEBI:29035"/>
        <label>2</label>
    </ligand>
</feature>
<feature type="binding site" evidence="1">
    <location>
        <position position="293"/>
    </location>
    <ligand>
        <name>Mn(2+)</name>
        <dbReference type="ChEBI" id="CHEBI:29035"/>
        <label>2</label>
    </ligand>
</feature>
<feature type="binding site" evidence="1">
    <location>
        <position position="352"/>
    </location>
    <ligand>
        <name>Mn(2+)</name>
        <dbReference type="ChEBI" id="CHEBI:29035"/>
        <label>1</label>
    </ligand>
</feature>
<feature type="binding site" evidence="1">
    <location>
        <position position="354"/>
    </location>
    <ligand>
        <name>Mn(2+)</name>
        <dbReference type="ChEBI" id="CHEBI:29035"/>
        <label>1</label>
    </ligand>
</feature>
<feature type="binding site" evidence="1">
    <location>
        <position position="354"/>
    </location>
    <ligand>
        <name>Mn(2+)</name>
        <dbReference type="ChEBI" id="CHEBI:29035"/>
        <label>2</label>
    </ligand>
</feature>
<dbReference type="EC" id="3.4.11.1"/>
<dbReference type="EC" id="3.4.11.10"/>
<dbReference type="EMBL" id="AE014075">
    <property type="protein sequence ID" value="AAN83782.1"/>
    <property type="molecule type" value="Genomic_DNA"/>
</dbReference>
<dbReference type="RefSeq" id="WP_000397144.1">
    <property type="nucleotide sequence ID" value="NZ_CP051263.1"/>
</dbReference>
<dbReference type="SMR" id="P68766"/>
<dbReference type="STRING" id="199310.c5360"/>
<dbReference type="MEROPS" id="M17.003"/>
<dbReference type="GeneID" id="93777558"/>
<dbReference type="KEGG" id="ecc:c5360"/>
<dbReference type="eggNOG" id="COG0260">
    <property type="taxonomic scope" value="Bacteria"/>
</dbReference>
<dbReference type="HOGENOM" id="CLU_013734_2_2_6"/>
<dbReference type="BioCyc" id="ECOL199310:C5360-MONOMER"/>
<dbReference type="Proteomes" id="UP000001410">
    <property type="component" value="Chromosome"/>
</dbReference>
<dbReference type="GO" id="GO:0005737">
    <property type="term" value="C:cytoplasm"/>
    <property type="evidence" value="ECO:0007669"/>
    <property type="project" value="UniProtKB-UniRule"/>
</dbReference>
<dbReference type="GO" id="GO:0030145">
    <property type="term" value="F:manganese ion binding"/>
    <property type="evidence" value="ECO:0007669"/>
    <property type="project" value="UniProtKB-UniRule"/>
</dbReference>
<dbReference type="GO" id="GO:0070006">
    <property type="term" value="F:metalloaminopeptidase activity"/>
    <property type="evidence" value="ECO:0007669"/>
    <property type="project" value="InterPro"/>
</dbReference>
<dbReference type="GO" id="GO:0006508">
    <property type="term" value="P:proteolysis"/>
    <property type="evidence" value="ECO:0007669"/>
    <property type="project" value="UniProtKB-KW"/>
</dbReference>
<dbReference type="CDD" id="cd00433">
    <property type="entry name" value="Peptidase_M17"/>
    <property type="match status" value="1"/>
</dbReference>
<dbReference type="FunFam" id="3.40.220.10:FF:000001">
    <property type="entry name" value="Probable cytosol aminopeptidase"/>
    <property type="match status" value="1"/>
</dbReference>
<dbReference type="FunFam" id="3.40.630.10:FF:000004">
    <property type="entry name" value="Probable cytosol aminopeptidase"/>
    <property type="match status" value="1"/>
</dbReference>
<dbReference type="Gene3D" id="3.40.220.10">
    <property type="entry name" value="Leucine Aminopeptidase, subunit E, domain 1"/>
    <property type="match status" value="1"/>
</dbReference>
<dbReference type="Gene3D" id="3.40.630.10">
    <property type="entry name" value="Zn peptidases"/>
    <property type="match status" value="1"/>
</dbReference>
<dbReference type="HAMAP" id="MF_00181">
    <property type="entry name" value="Cytosol_peptidase_M17"/>
    <property type="match status" value="1"/>
</dbReference>
<dbReference type="InterPro" id="IPR011356">
    <property type="entry name" value="Leucine_aapep/pepB"/>
</dbReference>
<dbReference type="InterPro" id="IPR043472">
    <property type="entry name" value="Macro_dom-like"/>
</dbReference>
<dbReference type="InterPro" id="IPR000819">
    <property type="entry name" value="Peptidase_M17_C"/>
</dbReference>
<dbReference type="InterPro" id="IPR023042">
    <property type="entry name" value="Peptidase_M17_leu_NH2_pept"/>
</dbReference>
<dbReference type="InterPro" id="IPR008283">
    <property type="entry name" value="Peptidase_M17_N"/>
</dbReference>
<dbReference type="NCBIfam" id="NF002072">
    <property type="entry name" value="PRK00913.1-1"/>
    <property type="match status" value="1"/>
</dbReference>
<dbReference type="NCBIfam" id="NF002073">
    <property type="entry name" value="PRK00913.1-2"/>
    <property type="match status" value="1"/>
</dbReference>
<dbReference type="NCBIfam" id="NF002074">
    <property type="entry name" value="PRK00913.1-4"/>
    <property type="match status" value="1"/>
</dbReference>
<dbReference type="PANTHER" id="PTHR11963:SF23">
    <property type="entry name" value="CYTOSOL AMINOPEPTIDASE"/>
    <property type="match status" value="1"/>
</dbReference>
<dbReference type="PANTHER" id="PTHR11963">
    <property type="entry name" value="LEUCINE AMINOPEPTIDASE-RELATED"/>
    <property type="match status" value="1"/>
</dbReference>
<dbReference type="Pfam" id="PF00883">
    <property type="entry name" value="Peptidase_M17"/>
    <property type="match status" value="1"/>
</dbReference>
<dbReference type="Pfam" id="PF02789">
    <property type="entry name" value="Peptidase_M17_N"/>
    <property type="match status" value="1"/>
</dbReference>
<dbReference type="PRINTS" id="PR00481">
    <property type="entry name" value="LAMNOPPTDASE"/>
</dbReference>
<dbReference type="SUPFAM" id="SSF52949">
    <property type="entry name" value="Macro domain-like"/>
    <property type="match status" value="1"/>
</dbReference>
<dbReference type="SUPFAM" id="SSF53187">
    <property type="entry name" value="Zn-dependent exopeptidases"/>
    <property type="match status" value="1"/>
</dbReference>
<dbReference type="PROSITE" id="PS00631">
    <property type="entry name" value="CYTOSOL_AP"/>
    <property type="match status" value="1"/>
</dbReference>
<name>AMPA_ECOL6</name>
<reference key="1">
    <citation type="journal article" date="2002" name="Proc. Natl. Acad. Sci. U.S.A.">
        <title>Extensive mosaic structure revealed by the complete genome sequence of uropathogenic Escherichia coli.</title>
        <authorList>
            <person name="Welch R.A."/>
            <person name="Burland V."/>
            <person name="Plunkett G. III"/>
            <person name="Redford P."/>
            <person name="Roesch P."/>
            <person name="Rasko D."/>
            <person name="Buckles E.L."/>
            <person name="Liou S.-R."/>
            <person name="Boutin A."/>
            <person name="Hackett J."/>
            <person name="Stroud D."/>
            <person name="Mayhew G.F."/>
            <person name="Rose D.J."/>
            <person name="Zhou S."/>
            <person name="Schwartz D.C."/>
            <person name="Perna N.T."/>
            <person name="Mobley H.L.T."/>
            <person name="Donnenberg M.S."/>
            <person name="Blattner F.R."/>
        </authorList>
    </citation>
    <scope>NUCLEOTIDE SEQUENCE [LARGE SCALE GENOMIC DNA]</scope>
    <source>
        <strain>CFT073 / ATCC 700928 / UPEC</strain>
    </source>
</reference>